<sequence length="779" mass="88858">MAATAELQGKYQKLAQEYSKLRAQNQVLKKGVVDEQANSASLKEQLKMKDQSLRKLQQEMDSLTFRNQQLAKRVELLQDELSLSETRGKKNKKSAESSSQLSQEQKSVFNEDLQKKIEENERLHILYFEADEQHKRLEAELRTKLEVLESDAAQHQAVVDSLTRKYTDTIEKLQNDKSKLEIKSQTLEREAKDCRLRTEECQQQLKNLQAALGSRLEESLCIINEKVPFNDTRSNRYNALNVPLHNRRYQLKLRDLAGQALSFVQEIVTALLNFHTYTEQKAQIFPIDSATDTISPLNQKFSQYLHENAFYVRPLEEGMLQLFESITEDTVTVLETAVKLKAFSEHLASYLCFLRKILPYQLKSLEEECESSLCTAALKARNMELHRDMKRLTAIFEKLHTYVSLLALPSTKPEGLLRTNYSLVFTNIAASLHGSHDILKDISKHYSQKATLEQDVPTATQKLVTTNDCILSSILSLTNGVGKIASFFSNNLDHFTSSLSYGPKGGTEFISPLSAECMLQYKKKAVAYMKSLKKPCADSVPYEEALANRRVLLSSTESREGLAQQVQQSLEKIAKLEQEKEHWMLEAQLAKIKLEKENQKLKNSLSGHLAETVQERSVLSNTAEQKEETTEKSQREPIKTTSLIGMLTITTDNEKVPDVESREDLIKKHYMARIAELTSHLQLADSKSVHFHAECRALAKRLSLAEKSKESLTEELKLASQSISRLQDELMTTKRSYEDQLSMMSDHLCSMNETLTKQREEIDTLKMTSKGNSKKNKTR</sequence>
<protein>
    <recommendedName>
        <fullName>Protein phosphatase 1 regulatory subunit 21</fullName>
    </recommendedName>
    <alternativeName>
        <fullName>Coiled-coil domain-containing protein 128</fullName>
    </alternativeName>
    <alternativeName>
        <fullName evidence="1">Ferry endosomal RAB5 effector complex subunit 2</fullName>
        <shortName evidence="1">Fy-2</shortName>
    </alternativeName>
    <alternativeName>
        <fullName>KLRAQ motif-containing protein 1</fullName>
    </alternativeName>
</protein>
<evidence type="ECO:0000250" key="1">
    <source>
        <dbReference type="UniProtKB" id="Q6ZMI0"/>
    </source>
</evidence>
<evidence type="ECO:0000255" key="2"/>
<evidence type="ECO:0000256" key="3">
    <source>
        <dbReference type="SAM" id="MobiDB-lite"/>
    </source>
</evidence>
<organism>
    <name type="scientific">Gallus gallus</name>
    <name type="common">Chicken</name>
    <dbReference type="NCBI Taxonomy" id="9031"/>
    <lineage>
        <taxon>Eukaryota</taxon>
        <taxon>Metazoa</taxon>
        <taxon>Chordata</taxon>
        <taxon>Craniata</taxon>
        <taxon>Vertebrata</taxon>
        <taxon>Euteleostomi</taxon>
        <taxon>Archelosauria</taxon>
        <taxon>Archosauria</taxon>
        <taxon>Dinosauria</taxon>
        <taxon>Saurischia</taxon>
        <taxon>Theropoda</taxon>
        <taxon>Coelurosauria</taxon>
        <taxon>Aves</taxon>
        <taxon>Neognathae</taxon>
        <taxon>Galloanserae</taxon>
        <taxon>Galliformes</taxon>
        <taxon>Phasianidae</taxon>
        <taxon>Phasianinae</taxon>
        <taxon>Gallus</taxon>
    </lineage>
</organism>
<gene>
    <name type="primary">PPP1R21</name>
    <name type="synonym">CCDC128</name>
    <name type="synonym">KLRAQ1</name>
    <name type="ORF">RCJMB04_8e10</name>
</gene>
<dbReference type="EMBL" id="AJ719922">
    <property type="protein sequence ID" value="CAG31581.1"/>
    <property type="molecule type" value="mRNA"/>
</dbReference>
<dbReference type="RefSeq" id="NP_001012891.1">
    <property type="nucleotide sequence ID" value="NM_001012873.1"/>
</dbReference>
<dbReference type="SMR" id="Q5ZL12"/>
<dbReference type="FunCoup" id="Q5ZL12">
    <property type="interactions" value="861"/>
</dbReference>
<dbReference type="STRING" id="9031.ENSGALP00000051156"/>
<dbReference type="PaxDb" id="9031-ENSGALP00000014507"/>
<dbReference type="GeneID" id="421287"/>
<dbReference type="KEGG" id="gga:421287"/>
<dbReference type="CTD" id="129285"/>
<dbReference type="VEuPathDB" id="HostDB:geneid_421287"/>
<dbReference type="eggNOG" id="KOG4421">
    <property type="taxonomic scope" value="Eukaryota"/>
</dbReference>
<dbReference type="InParanoid" id="Q5ZL12"/>
<dbReference type="OrthoDB" id="5566667at2759"/>
<dbReference type="PhylomeDB" id="Q5ZL12"/>
<dbReference type="PRO" id="PR:Q5ZL12"/>
<dbReference type="Proteomes" id="UP000000539">
    <property type="component" value="Unassembled WGS sequence"/>
</dbReference>
<dbReference type="GO" id="GO:0005769">
    <property type="term" value="C:early endosome"/>
    <property type="evidence" value="ECO:0000250"/>
    <property type="project" value="UniProtKB"/>
</dbReference>
<dbReference type="GO" id="GO:0003723">
    <property type="term" value="F:RNA binding"/>
    <property type="evidence" value="ECO:0007669"/>
    <property type="project" value="UniProtKB-KW"/>
</dbReference>
<dbReference type="InterPro" id="IPR040024">
    <property type="entry name" value="PPP1R21"/>
</dbReference>
<dbReference type="InterPro" id="IPR049372">
    <property type="entry name" value="PPP1R21_C"/>
</dbReference>
<dbReference type="InterPro" id="IPR019343">
    <property type="entry name" value="PPP1R21_N"/>
</dbReference>
<dbReference type="InterPro" id="IPR019348">
    <property type="entry name" value="PPP1R21_six_helix"/>
</dbReference>
<dbReference type="PANTHER" id="PTHR21448:SF0">
    <property type="entry name" value="PROTEIN PHOSPHATASE 1 REGULATORY SUBUNIT 21"/>
    <property type="match status" value="1"/>
</dbReference>
<dbReference type="PANTHER" id="PTHR21448">
    <property type="entry name" value="SMOOTH MUSCLE MYOSIN HEAVY CHAIN-RELATED"/>
    <property type="match status" value="1"/>
</dbReference>
<dbReference type="Pfam" id="PF10205">
    <property type="entry name" value="KLRAQ"/>
    <property type="match status" value="1"/>
</dbReference>
<dbReference type="Pfam" id="PF21636">
    <property type="entry name" value="PPP1R21_C"/>
    <property type="match status" value="1"/>
</dbReference>
<dbReference type="Pfam" id="PF10212">
    <property type="entry name" value="PPP1R21_helical"/>
    <property type="match status" value="1"/>
</dbReference>
<dbReference type="SMART" id="SM01254">
    <property type="entry name" value="KLRAQ"/>
    <property type="match status" value="1"/>
</dbReference>
<name>PPR21_CHICK</name>
<feature type="chain" id="PRO_0000286100" description="Protein phosphatase 1 regulatory subunit 21">
    <location>
        <begin position="1"/>
        <end position="779"/>
    </location>
</feature>
<feature type="region of interest" description="Disordered" evidence="3">
    <location>
        <begin position="85"/>
        <end position="105"/>
    </location>
</feature>
<feature type="region of interest" description="Disordered" evidence="3">
    <location>
        <begin position="612"/>
        <end position="637"/>
    </location>
</feature>
<feature type="region of interest" description="Disordered" evidence="3">
    <location>
        <begin position="760"/>
        <end position="779"/>
    </location>
</feature>
<feature type="coiled-coil region" evidence="2">
    <location>
        <begin position="2"/>
        <end position="212"/>
    </location>
</feature>
<feature type="coiled-coil region" evidence="2">
    <location>
        <begin position="556"/>
        <end position="614"/>
    </location>
</feature>
<feature type="coiled-coil region" evidence="2">
    <location>
        <begin position="693"/>
        <end position="739"/>
    </location>
</feature>
<feature type="compositionally biased region" description="Low complexity" evidence="3">
    <location>
        <begin position="96"/>
        <end position="105"/>
    </location>
</feature>
<feature type="compositionally biased region" description="Basic and acidic residues" evidence="3">
    <location>
        <begin position="624"/>
        <end position="637"/>
    </location>
</feature>
<keyword id="KW-0175">Coiled coil</keyword>
<keyword id="KW-0967">Endosome</keyword>
<keyword id="KW-1185">Reference proteome</keyword>
<keyword id="KW-0694">RNA-binding</keyword>
<accession>Q5ZL12</accession>
<reference key="1">
    <citation type="journal article" date="2005" name="Genome Biol.">
        <title>Full-length cDNAs from chicken bursal lymphocytes to facilitate gene function analysis.</title>
        <authorList>
            <person name="Caldwell R.B."/>
            <person name="Kierzek A.M."/>
            <person name="Arakawa H."/>
            <person name="Bezzubov Y."/>
            <person name="Zaim J."/>
            <person name="Fiedler P."/>
            <person name="Kutter S."/>
            <person name="Blagodatski A."/>
            <person name="Kostovska D."/>
            <person name="Koter M."/>
            <person name="Plachy J."/>
            <person name="Carninci P."/>
            <person name="Hayashizaki Y."/>
            <person name="Buerstedde J.-M."/>
        </authorList>
    </citation>
    <scope>NUCLEOTIDE SEQUENCE [LARGE SCALE MRNA]</scope>
    <source>
        <strain>CB</strain>
        <tissue>Bursa of Fabricius</tissue>
    </source>
</reference>
<proteinExistence type="evidence at transcript level"/>
<comment type="function">
    <text evidence="1">Component of the FERRY complex (Five-subunit Endosomal Rab5 and RNA/ribosome intermediary). The FERRY complex directly interacts with mRNAs and RAB5A, and functions as a RAB5A effector involved in the localization and the distribution of specific mRNAs most likely by mediating their endosomal transport. The complex recruits mRNAs and ribosomes to early endosomes through direct mRNA-interaction (By similarity). Putative regulator of protein phosphatase 1 (PP1) activity. May play a role in the endosomal sorting process or in endosome maturation pathway (By similarity).</text>
</comment>
<comment type="subunit">
    <text evidence="1">Component of the FERRY complex.</text>
</comment>
<comment type="subcellular location">
    <subcellularLocation>
        <location evidence="1">Early endosome</location>
    </subcellularLocation>
</comment>
<comment type="domain">
    <text evidence="1">Coiled-coil domains of PPP1R21 are essential for RNA binding.</text>
</comment>